<name>EFP_ACIET</name>
<keyword id="KW-0963">Cytoplasm</keyword>
<keyword id="KW-0251">Elongation factor</keyword>
<keyword id="KW-0648">Protein biosynthesis</keyword>
<keyword id="KW-1185">Reference proteome</keyword>
<proteinExistence type="inferred from homology"/>
<gene>
    <name evidence="1" type="primary">efp</name>
    <name type="ordered locus">Dtpsy_2362</name>
</gene>
<dbReference type="EMBL" id="CP001392">
    <property type="protein sequence ID" value="ACM33799.1"/>
    <property type="molecule type" value="Genomic_DNA"/>
</dbReference>
<dbReference type="RefSeq" id="WP_011806028.1">
    <property type="nucleotide sequence ID" value="NC_011992.1"/>
</dbReference>
<dbReference type="SMR" id="B9MC94"/>
<dbReference type="GeneID" id="84680877"/>
<dbReference type="KEGG" id="dia:Dtpsy_2362"/>
<dbReference type="eggNOG" id="COG0231">
    <property type="taxonomic scope" value="Bacteria"/>
</dbReference>
<dbReference type="HOGENOM" id="CLU_074944_2_1_4"/>
<dbReference type="UniPathway" id="UPA00345"/>
<dbReference type="Proteomes" id="UP000000450">
    <property type="component" value="Chromosome"/>
</dbReference>
<dbReference type="GO" id="GO:0005737">
    <property type="term" value="C:cytoplasm"/>
    <property type="evidence" value="ECO:0007669"/>
    <property type="project" value="UniProtKB-SubCell"/>
</dbReference>
<dbReference type="GO" id="GO:0003746">
    <property type="term" value="F:translation elongation factor activity"/>
    <property type="evidence" value="ECO:0007669"/>
    <property type="project" value="UniProtKB-UniRule"/>
</dbReference>
<dbReference type="GO" id="GO:0043043">
    <property type="term" value="P:peptide biosynthetic process"/>
    <property type="evidence" value="ECO:0007669"/>
    <property type="project" value="InterPro"/>
</dbReference>
<dbReference type="CDD" id="cd05794">
    <property type="entry name" value="S1_EF-P_repeat_2"/>
    <property type="match status" value="1"/>
</dbReference>
<dbReference type="FunFam" id="2.30.30.30:FF:000003">
    <property type="entry name" value="Elongation factor P"/>
    <property type="match status" value="1"/>
</dbReference>
<dbReference type="FunFam" id="2.40.50.140:FF:000004">
    <property type="entry name" value="Elongation factor P"/>
    <property type="match status" value="1"/>
</dbReference>
<dbReference type="FunFam" id="2.40.50.140:FF:000009">
    <property type="entry name" value="Elongation factor P"/>
    <property type="match status" value="1"/>
</dbReference>
<dbReference type="Gene3D" id="2.30.30.30">
    <property type="match status" value="1"/>
</dbReference>
<dbReference type="Gene3D" id="2.40.50.140">
    <property type="entry name" value="Nucleic acid-binding proteins"/>
    <property type="match status" value="2"/>
</dbReference>
<dbReference type="HAMAP" id="MF_00141">
    <property type="entry name" value="EF_P"/>
    <property type="match status" value="1"/>
</dbReference>
<dbReference type="InterPro" id="IPR015365">
    <property type="entry name" value="Elong-fact-P_C"/>
</dbReference>
<dbReference type="InterPro" id="IPR012340">
    <property type="entry name" value="NA-bd_OB-fold"/>
</dbReference>
<dbReference type="InterPro" id="IPR014722">
    <property type="entry name" value="Rib_uL2_dom2"/>
</dbReference>
<dbReference type="InterPro" id="IPR020599">
    <property type="entry name" value="Transl_elong_fac_P/YeiP"/>
</dbReference>
<dbReference type="InterPro" id="IPR013185">
    <property type="entry name" value="Transl_elong_KOW-like"/>
</dbReference>
<dbReference type="InterPro" id="IPR001059">
    <property type="entry name" value="Transl_elong_P/YeiP_cen"/>
</dbReference>
<dbReference type="InterPro" id="IPR013852">
    <property type="entry name" value="Transl_elong_P/YeiP_CS"/>
</dbReference>
<dbReference type="InterPro" id="IPR011768">
    <property type="entry name" value="Transl_elongation_fac_P"/>
</dbReference>
<dbReference type="InterPro" id="IPR008991">
    <property type="entry name" value="Translation_prot_SH3-like_sf"/>
</dbReference>
<dbReference type="NCBIfam" id="TIGR00038">
    <property type="entry name" value="efp"/>
    <property type="match status" value="1"/>
</dbReference>
<dbReference type="NCBIfam" id="NF001810">
    <property type="entry name" value="PRK00529.1"/>
    <property type="match status" value="1"/>
</dbReference>
<dbReference type="PANTHER" id="PTHR30053">
    <property type="entry name" value="ELONGATION FACTOR P"/>
    <property type="match status" value="1"/>
</dbReference>
<dbReference type="PANTHER" id="PTHR30053:SF12">
    <property type="entry name" value="ELONGATION FACTOR P (EF-P) FAMILY PROTEIN"/>
    <property type="match status" value="1"/>
</dbReference>
<dbReference type="Pfam" id="PF01132">
    <property type="entry name" value="EFP"/>
    <property type="match status" value="1"/>
</dbReference>
<dbReference type="Pfam" id="PF08207">
    <property type="entry name" value="EFP_N"/>
    <property type="match status" value="1"/>
</dbReference>
<dbReference type="Pfam" id="PF09285">
    <property type="entry name" value="Elong-fact-P_C"/>
    <property type="match status" value="1"/>
</dbReference>
<dbReference type="PIRSF" id="PIRSF005901">
    <property type="entry name" value="EF-P"/>
    <property type="match status" value="1"/>
</dbReference>
<dbReference type="SMART" id="SM01185">
    <property type="entry name" value="EFP"/>
    <property type="match status" value="1"/>
</dbReference>
<dbReference type="SMART" id="SM00841">
    <property type="entry name" value="Elong-fact-P_C"/>
    <property type="match status" value="1"/>
</dbReference>
<dbReference type="SUPFAM" id="SSF50249">
    <property type="entry name" value="Nucleic acid-binding proteins"/>
    <property type="match status" value="2"/>
</dbReference>
<dbReference type="SUPFAM" id="SSF50104">
    <property type="entry name" value="Translation proteins SH3-like domain"/>
    <property type="match status" value="1"/>
</dbReference>
<dbReference type="PROSITE" id="PS01275">
    <property type="entry name" value="EFP"/>
    <property type="match status" value="1"/>
</dbReference>
<organism>
    <name type="scientific">Acidovorax ebreus (strain TPSY)</name>
    <name type="common">Diaphorobacter sp. (strain TPSY)</name>
    <dbReference type="NCBI Taxonomy" id="535289"/>
    <lineage>
        <taxon>Bacteria</taxon>
        <taxon>Pseudomonadati</taxon>
        <taxon>Pseudomonadota</taxon>
        <taxon>Betaproteobacteria</taxon>
        <taxon>Burkholderiales</taxon>
        <taxon>Comamonadaceae</taxon>
        <taxon>Diaphorobacter</taxon>
    </lineage>
</organism>
<evidence type="ECO:0000255" key="1">
    <source>
        <dbReference type="HAMAP-Rule" id="MF_00141"/>
    </source>
</evidence>
<sequence length="184" mass="20482">MKIAQEIRAGNVIMQGKDPMIVLKTEYARGGRGAATVRMKLKALLSNMGTEVVFKADDKIDNVILDKKECTYSYFADPMYVWMDAEYNQYEVEASNMGDAISYLEDGMAAEVVFYDGKAISVELPTSVEREITWTEPAVKGDTSGKVLKPAKIATGFEVAVPLFVDQGDKIEIDTRTGEYRKRV</sequence>
<accession>B9MC94</accession>
<reference key="1">
    <citation type="submission" date="2009-01" db="EMBL/GenBank/DDBJ databases">
        <title>Complete sequence of Diaphorobacter sp. TPSY.</title>
        <authorList>
            <consortium name="US DOE Joint Genome Institute"/>
            <person name="Lucas S."/>
            <person name="Copeland A."/>
            <person name="Lapidus A."/>
            <person name="Glavina del Rio T."/>
            <person name="Tice H."/>
            <person name="Bruce D."/>
            <person name="Goodwin L."/>
            <person name="Pitluck S."/>
            <person name="Chertkov O."/>
            <person name="Brettin T."/>
            <person name="Detter J.C."/>
            <person name="Han C."/>
            <person name="Larimer F."/>
            <person name="Land M."/>
            <person name="Hauser L."/>
            <person name="Kyrpides N."/>
            <person name="Mikhailova N."/>
            <person name="Coates J.D."/>
        </authorList>
    </citation>
    <scope>NUCLEOTIDE SEQUENCE [LARGE SCALE GENOMIC DNA]</scope>
    <source>
        <strain>TPSY</strain>
    </source>
</reference>
<feature type="chain" id="PRO_1000123007" description="Elongation factor P">
    <location>
        <begin position="1"/>
        <end position="184"/>
    </location>
</feature>
<protein>
    <recommendedName>
        <fullName evidence="1">Elongation factor P</fullName>
        <shortName evidence="1">EF-P</shortName>
    </recommendedName>
</protein>
<comment type="function">
    <text evidence="1">Involved in peptide bond synthesis. Stimulates efficient translation and peptide-bond synthesis on native or reconstituted 70S ribosomes in vitro. Probably functions indirectly by altering the affinity of the ribosome for aminoacyl-tRNA, thus increasing their reactivity as acceptors for peptidyl transferase.</text>
</comment>
<comment type="pathway">
    <text evidence="1">Protein biosynthesis; polypeptide chain elongation.</text>
</comment>
<comment type="subcellular location">
    <subcellularLocation>
        <location evidence="1">Cytoplasm</location>
    </subcellularLocation>
</comment>
<comment type="similarity">
    <text evidence="1">Belongs to the elongation factor P family.</text>
</comment>